<accession>A1WUF3</accession>
<sequence>MTGTPNSRRIDVITVFPEMVEQVARFGVVGRAAERGLIELSAWNPRDYAEDRHATVDDRPYGGGPGMVMKVAPLHRAIQAARAADPRPARVIHLSPQGARLDQDRVARLAACERVIYLCGRYEGIDERLLEAEVDEELSIGDYVLSGGELAAMVAIDAATRLVPGALGHEDSAAEDSFATGLLDHPHYTRPEVYERRGVPEVLRSGDHGAVDTWRLKQALGRTWLRRPDLLAGRELDERQRRLLDEFIAEHRAEARAGNDHDET</sequence>
<name>TRMD_HALHL</name>
<reference key="1">
    <citation type="submission" date="2006-12" db="EMBL/GenBank/DDBJ databases">
        <title>Complete sequence of Halorhodospira halophila SL1.</title>
        <authorList>
            <consortium name="US DOE Joint Genome Institute"/>
            <person name="Copeland A."/>
            <person name="Lucas S."/>
            <person name="Lapidus A."/>
            <person name="Barry K."/>
            <person name="Detter J.C."/>
            <person name="Glavina del Rio T."/>
            <person name="Hammon N."/>
            <person name="Israni S."/>
            <person name="Dalin E."/>
            <person name="Tice H."/>
            <person name="Pitluck S."/>
            <person name="Saunders E."/>
            <person name="Brettin T."/>
            <person name="Bruce D."/>
            <person name="Han C."/>
            <person name="Tapia R."/>
            <person name="Schmutz J."/>
            <person name="Larimer F."/>
            <person name="Land M."/>
            <person name="Hauser L."/>
            <person name="Kyrpides N."/>
            <person name="Mikhailova N."/>
            <person name="Hoff W."/>
            <person name="Richardson P."/>
        </authorList>
    </citation>
    <scope>NUCLEOTIDE SEQUENCE [LARGE SCALE GENOMIC DNA]</scope>
    <source>
        <strain>DSM 244 / SL1</strain>
    </source>
</reference>
<comment type="function">
    <text evidence="1">Specifically methylates guanosine-37 in various tRNAs.</text>
</comment>
<comment type="catalytic activity">
    <reaction evidence="1">
        <text>guanosine(37) in tRNA + S-adenosyl-L-methionine = N(1)-methylguanosine(37) in tRNA + S-adenosyl-L-homocysteine + H(+)</text>
        <dbReference type="Rhea" id="RHEA:36899"/>
        <dbReference type="Rhea" id="RHEA-COMP:10145"/>
        <dbReference type="Rhea" id="RHEA-COMP:10147"/>
        <dbReference type="ChEBI" id="CHEBI:15378"/>
        <dbReference type="ChEBI" id="CHEBI:57856"/>
        <dbReference type="ChEBI" id="CHEBI:59789"/>
        <dbReference type="ChEBI" id="CHEBI:73542"/>
        <dbReference type="ChEBI" id="CHEBI:74269"/>
        <dbReference type="EC" id="2.1.1.228"/>
    </reaction>
</comment>
<comment type="subunit">
    <text evidence="1">Homodimer.</text>
</comment>
<comment type="subcellular location">
    <subcellularLocation>
        <location evidence="1">Cytoplasm</location>
    </subcellularLocation>
</comment>
<comment type="similarity">
    <text evidence="1">Belongs to the RNA methyltransferase TrmD family.</text>
</comment>
<evidence type="ECO:0000255" key="1">
    <source>
        <dbReference type="HAMAP-Rule" id="MF_00605"/>
    </source>
</evidence>
<organism>
    <name type="scientific">Halorhodospira halophila (strain DSM 244 / SL1)</name>
    <name type="common">Ectothiorhodospira halophila (strain DSM 244 / SL1)</name>
    <dbReference type="NCBI Taxonomy" id="349124"/>
    <lineage>
        <taxon>Bacteria</taxon>
        <taxon>Pseudomonadati</taxon>
        <taxon>Pseudomonadota</taxon>
        <taxon>Gammaproteobacteria</taxon>
        <taxon>Chromatiales</taxon>
        <taxon>Ectothiorhodospiraceae</taxon>
        <taxon>Halorhodospira</taxon>
    </lineage>
</organism>
<protein>
    <recommendedName>
        <fullName evidence="1">tRNA (guanine-N(1)-)-methyltransferase</fullName>
        <ecNumber evidence="1">2.1.1.228</ecNumber>
    </recommendedName>
    <alternativeName>
        <fullName evidence="1">M1G-methyltransferase</fullName>
    </alternativeName>
    <alternativeName>
        <fullName evidence="1">tRNA [GM37] methyltransferase</fullName>
    </alternativeName>
</protein>
<gene>
    <name evidence="1" type="primary">trmD</name>
    <name type="ordered locus">Hhal_0528</name>
</gene>
<proteinExistence type="inferred from homology"/>
<dbReference type="EC" id="2.1.1.228" evidence="1"/>
<dbReference type="EMBL" id="CP000544">
    <property type="protein sequence ID" value="ABM61315.1"/>
    <property type="molecule type" value="Genomic_DNA"/>
</dbReference>
<dbReference type="RefSeq" id="WP_011813338.1">
    <property type="nucleotide sequence ID" value="NC_008789.1"/>
</dbReference>
<dbReference type="SMR" id="A1WUF3"/>
<dbReference type="STRING" id="349124.Hhal_0528"/>
<dbReference type="KEGG" id="hha:Hhal_0528"/>
<dbReference type="eggNOG" id="COG0336">
    <property type="taxonomic scope" value="Bacteria"/>
</dbReference>
<dbReference type="HOGENOM" id="CLU_047363_0_1_6"/>
<dbReference type="OrthoDB" id="9807416at2"/>
<dbReference type="Proteomes" id="UP000000647">
    <property type="component" value="Chromosome"/>
</dbReference>
<dbReference type="GO" id="GO:0005829">
    <property type="term" value="C:cytosol"/>
    <property type="evidence" value="ECO:0007669"/>
    <property type="project" value="TreeGrafter"/>
</dbReference>
<dbReference type="GO" id="GO:0052906">
    <property type="term" value="F:tRNA (guanine(37)-N1)-methyltransferase activity"/>
    <property type="evidence" value="ECO:0007669"/>
    <property type="project" value="UniProtKB-UniRule"/>
</dbReference>
<dbReference type="GO" id="GO:0002939">
    <property type="term" value="P:tRNA N1-guanine methylation"/>
    <property type="evidence" value="ECO:0007669"/>
    <property type="project" value="TreeGrafter"/>
</dbReference>
<dbReference type="CDD" id="cd18080">
    <property type="entry name" value="TrmD-like"/>
    <property type="match status" value="1"/>
</dbReference>
<dbReference type="FunFam" id="1.10.1270.20:FF:000001">
    <property type="entry name" value="tRNA (guanine-N(1)-)-methyltransferase"/>
    <property type="match status" value="1"/>
</dbReference>
<dbReference type="FunFam" id="3.40.1280.10:FF:000001">
    <property type="entry name" value="tRNA (guanine-N(1)-)-methyltransferase"/>
    <property type="match status" value="1"/>
</dbReference>
<dbReference type="Gene3D" id="3.40.1280.10">
    <property type="match status" value="1"/>
</dbReference>
<dbReference type="Gene3D" id="1.10.1270.20">
    <property type="entry name" value="tRNA(m1g37)methyltransferase, domain 2"/>
    <property type="match status" value="1"/>
</dbReference>
<dbReference type="HAMAP" id="MF_00605">
    <property type="entry name" value="TrmD"/>
    <property type="match status" value="1"/>
</dbReference>
<dbReference type="InterPro" id="IPR029028">
    <property type="entry name" value="Alpha/beta_knot_MTases"/>
</dbReference>
<dbReference type="InterPro" id="IPR023148">
    <property type="entry name" value="tRNA_m1G_MeTrfase_C_sf"/>
</dbReference>
<dbReference type="InterPro" id="IPR002649">
    <property type="entry name" value="tRNA_m1G_MeTrfase_TrmD"/>
</dbReference>
<dbReference type="InterPro" id="IPR029026">
    <property type="entry name" value="tRNA_m1G_MTases_N"/>
</dbReference>
<dbReference type="InterPro" id="IPR016009">
    <property type="entry name" value="tRNA_MeTrfase_TRMD/TRM10"/>
</dbReference>
<dbReference type="NCBIfam" id="NF000648">
    <property type="entry name" value="PRK00026.1"/>
    <property type="match status" value="1"/>
</dbReference>
<dbReference type="NCBIfam" id="TIGR00088">
    <property type="entry name" value="trmD"/>
    <property type="match status" value="1"/>
</dbReference>
<dbReference type="PANTHER" id="PTHR46417">
    <property type="entry name" value="TRNA (GUANINE-N(1)-)-METHYLTRANSFERASE"/>
    <property type="match status" value="1"/>
</dbReference>
<dbReference type="PANTHER" id="PTHR46417:SF1">
    <property type="entry name" value="TRNA (GUANINE-N(1)-)-METHYLTRANSFERASE"/>
    <property type="match status" value="1"/>
</dbReference>
<dbReference type="Pfam" id="PF01746">
    <property type="entry name" value="tRNA_m1G_MT"/>
    <property type="match status" value="1"/>
</dbReference>
<dbReference type="PIRSF" id="PIRSF000386">
    <property type="entry name" value="tRNA_mtase"/>
    <property type="match status" value="1"/>
</dbReference>
<dbReference type="SUPFAM" id="SSF75217">
    <property type="entry name" value="alpha/beta knot"/>
    <property type="match status" value="1"/>
</dbReference>
<keyword id="KW-0963">Cytoplasm</keyword>
<keyword id="KW-0489">Methyltransferase</keyword>
<keyword id="KW-1185">Reference proteome</keyword>
<keyword id="KW-0949">S-adenosyl-L-methionine</keyword>
<keyword id="KW-0808">Transferase</keyword>
<keyword id="KW-0819">tRNA processing</keyword>
<feature type="chain" id="PRO_1000006484" description="tRNA (guanine-N(1)-)-methyltransferase">
    <location>
        <begin position="1"/>
        <end position="264"/>
    </location>
</feature>
<feature type="binding site" evidence="1">
    <location>
        <position position="120"/>
    </location>
    <ligand>
        <name>S-adenosyl-L-methionine</name>
        <dbReference type="ChEBI" id="CHEBI:59789"/>
    </ligand>
</feature>
<feature type="binding site" evidence="1">
    <location>
        <begin position="140"/>
        <end position="145"/>
    </location>
    <ligand>
        <name>S-adenosyl-L-methionine</name>
        <dbReference type="ChEBI" id="CHEBI:59789"/>
    </ligand>
</feature>